<protein>
    <recommendedName>
        <fullName>Protein-L-isoaspartate O-methyltransferase</fullName>
        <ecNumber>2.1.1.77</ecNumber>
    </recommendedName>
    <alternativeName>
        <fullName>L-isoaspartyl protein carboxyl methyltransferase</fullName>
    </alternativeName>
    <alternativeName>
        <fullName>Protein L-isoaspartyl methyltransferase</fullName>
    </alternativeName>
    <alternativeName>
        <fullName>Protein-beta-aspartate methyltransferase</fullName>
        <shortName>PIMT</shortName>
    </alternativeName>
</protein>
<name>PIMT_PYRAB</name>
<feature type="chain" id="PRO_0000111921" description="Protein-L-isoaspartate O-methyltransferase">
    <location>
        <begin position="1"/>
        <end position="216"/>
    </location>
</feature>
<feature type="active site" evidence="1">
    <location>
        <position position="61"/>
    </location>
</feature>
<proteinExistence type="inferred from homology"/>
<organism>
    <name type="scientific">Pyrococcus abyssi (strain GE5 / Orsay)</name>
    <dbReference type="NCBI Taxonomy" id="272844"/>
    <lineage>
        <taxon>Archaea</taxon>
        <taxon>Methanobacteriati</taxon>
        <taxon>Methanobacteriota</taxon>
        <taxon>Thermococci</taxon>
        <taxon>Thermococcales</taxon>
        <taxon>Thermococcaceae</taxon>
        <taxon>Pyrococcus</taxon>
    </lineage>
</organism>
<sequence>MDLYERWKRTVEMLEREGIIRSLEVKEAFLKYPRYMFVEDRYKSYAHIDEPLPIPAGQTVSAPHMVAIMLEIAKLKEGMNVLEVGTGSGWNAALISYIVKTDVYSIERIPELVEFAKRNLERAGVKNVHVILGDGSKGFPPKAPYDVIIVTAGAPKVPEPLVEQLKPGGRLIIPVGSYHLWQELLEVVKKKSGEIKVRNHGGVAFVPLIGEYGWRE</sequence>
<gene>
    <name type="primary">pcm</name>
    <name type="ordered locus">PYRAB17380</name>
    <name type="ORF">PAB1206</name>
</gene>
<accession>Q9UXX0</accession>
<accession>G8ZKS0</accession>
<reference key="1">
    <citation type="journal article" date="2003" name="Mol. Microbiol.">
        <title>An integrated analysis of the genome of the hyperthermophilic archaeon Pyrococcus abyssi.</title>
        <authorList>
            <person name="Cohen G.N."/>
            <person name="Barbe V."/>
            <person name="Flament D."/>
            <person name="Galperin M."/>
            <person name="Heilig R."/>
            <person name="Lecompte O."/>
            <person name="Poch O."/>
            <person name="Prieur D."/>
            <person name="Querellou J."/>
            <person name="Ripp R."/>
            <person name="Thierry J.-C."/>
            <person name="Van der Oost J."/>
            <person name="Weissenbach J."/>
            <person name="Zivanovic Y."/>
            <person name="Forterre P."/>
        </authorList>
    </citation>
    <scope>NUCLEOTIDE SEQUENCE [LARGE SCALE GENOMIC DNA]</scope>
    <source>
        <strain>GE5 / Orsay</strain>
    </source>
</reference>
<reference key="2">
    <citation type="journal article" date="2012" name="Curr. Microbiol.">
        <title>Re-annotation of two hyperthermophilic archaea Pyrococcus abyssi GE5 and Pyrococcus furiosus DSM 3638.</title>
        <authorList>
            <person name="Gao J."/>
            <person name="Wang J."/>
        </authorList>
    </citation>
    <scope>GENOME REANNOTATION</scope>
    <source>
        <strain>GE5 / Orsay</strain>
    </source>
</reference>
<dbReference type="EC" id="2.1.1.77"/>
<dbReference type="EMBL" id="AJ248288">
    <property type="protein sequence ID" value="CAB50643.1"/>
    <property type="status" value="ALT_INIT"/>
    <property type="molecule type" value="Genomic_DNA"/>
</dbReference>
<dbReference type="EMBL" id="HE613800">
    <property type="protein sequence ID" value="CCE71211.1"/>
    <property type="molecule type" value="Genomic_DNA"/>
</dbReference>
<dbReference type="PIR" id="E75025">
    <property type="entry name" value="E75025"/>
</dbReference>
<dbReference type="RefSeq" id="WP_048147186.1">
    <property type="nucleotide sequence ID" value="NC_000868.1"/>
</dbReference>
<dbReference type="SMR" id="Q9UXX0"/>
<dbReference type="STRING" id="272844.PAB1206"/>
<dbReference type="KEGG" id="pab:PAB1206"/>
<dbReference type="PATRIC" id="fig|272844.11.peg.1856"/>
<dbReference type="eggNOG" id="arCOG00976">
    <property type="taxonomic scope" value="Archaea"/>
</dbReference>
<dbReference type="HOGENOM" id="CLU_055432_2_0_2"/>
<dbReference type="OrthoDB" id="33618at2157"/>
<dbReference type="Proteomes" id="UP000000810">
    <property type="component" value="Chromosome"/>
</dbReference>
<dbReference type="Proteomes" id="UP000009139">
    <property type="component" value="Chromosome"/>
</dbReference>
<dbReference type="GO" id="GO:0005737">
    <property type="term" value="C:cytoplasm"/>
    <property type="evidence" value="ECO:0007669"/>
    <property type="project" value="UniProtKB-SubCell"/>
</dbReference>
<dbReference type="GO" id="GO:0004719">
    <property type="term" value="F:protein-L-isoaspartate (D-aspartate) O-methyltransferase activity"/>
    <property type="evidence" value="ECO:0007669"/>
    <property type="project" value="UniProtKB-UniRule"/>
</dbReference>
<dbReference type="GO" id="GO:0032259">
    <property type="term" value="P:methylation"/>
    <property type="evidence" value="ECO:0007669"/>
    <property type="project" value="UniProtKB-KW"/>
</dbReference>
<dbReference type="GO" id="GO:0036211">
    <property type="term" value="P:protein modification process"/>
    <property type="evidence" value="ECO:0007669"/>
    <property type="project" value="UniProtKB-UniRule"/>
</dbReference>
<dbReference type="GO" id="GO:0030091">
    <property type="term" value="P:protein repair"/>
    <property type="evidence" value="ECO:0007669"/>
    <property type="project" value="UniProtKB-UniRule"/>
</dbReference>
<dbReference type="CDD" id="cd02440">
    <property type="entry name" value="AdoMet_MTases"/>
    <property type="match status" value="1"/>
</dbReference>
<dbReference type="FunFam" id="3.40.50.150:FF:000010">
    <property type="entry name" value="Protein-L-isoaspartate O-methyltransferase"/>
    <property type="match status" value="1"/>
</dbReference>
<dbReference type="Gene3D" id="3.40.50.150">
    <property type="entry name" value="Vaccinia Virus protein VP39"/>
    <property type="match status" value="1"/>
</dbReference>
<dbReference type="HAMAP" id="MF_00090">
    <property type="entry name" value="PIMT"/>
    <property type="match status" value="1"/>
</dbReference>
<dbReference type="InterPro" id="IPR000682">
    <property type="entry name" value="PCMT"/>
</dbReference>
<dbReference type="InterPro" id="IPR029063">
    <property type="entry name" value="SAM-dependent_MTases_sf"/>
</dbReference>
<dbReference type="NCBIfam" id="TIGR00080">
    <property type="entry name" value="pimt"/>
    <property type="match status" value="1"/>
</dbReference>
<dbReference type="NCBIfam" id="NF001453">
    <property type="entry name" value="PRK00312.1"/>
    <property type="match status" value="1"/>
</dbReference>
<dbReference type="PANTHER" id="PTHR11579">
    <property type="entry name" value="PROTEIN-L-ISOASPARTATE O-METHYLTRANSFERASE"/>
    <property type="match status" value="1"/>
</dbReference>
<dbReference type="PANTHER" id="PTHR11579:SF0">
    <property type="entry name" value="PROTEIN-L-ISOASPARTATE(D-ASPARTATE) O-METHYLTRANSFERASE"/>
    <property type="match status" value="1"/>
</dbReference>
<dbReference type="Pfam" id="PF01135">
    <property type="entry name" value="PCMT"/>
    <property type="match status" value="1"/>
</dbReference>
<dbReference type="SUPFAM" id="SSF53335">
    <property type="entry name" value="S-adenosyl-L-methionine-dependent methyltransferases"/>
    <property type="match status" value="1"/>
</dbReference>
<dbReference type="PROSITE" id="PS01279">
    <property type="entry name" value="PCMT"/>
    <property type="match status" value="1"/>
</dbReference>
<keyword id="KW-0963">Cytoplasm</keyword>
<keyword id="KW-0489">Methyltransferase</keyword>
<keyword id="KW-0949">S-adenosyl-L-methionine</keyword>
<keyword id="KW-0808">Transferase</keyword>
<evidence type="ECO:0000250" key="1"/>
<evidence type="ECO:0000305" key="2"/>
<comment type="function">
    <text evidence="1">Catalyzes the methyl esterification of L-isoaspartyl residues in peptides and proteins that result from spontaneous decomposition of normal L-aspartyl and L-asparaginyl residues. It plays a role in the repair and/or degradation of damaged proteins (By similarity).</text>
</comment>
<comment type="catalytic activity">
    <reaction>
        <text>[protein]-L-isoaspartate + S-adenosyl-L-methionine = [protein]-L-isoaspartate alpha-methyl ester + S-adenosyl-L-homocysteine</text>
        <dbReference type="Rhea" id="RHEA:12705"/>
        <dbReference type="Rhea" id="RHEA-COMP:12143"/>
        <dbReference type="Rhea" id="RHEA-COMP:12144"/>
        <dbReference type="ChEBI" id="CHEBI:57856"/>
        <dbReference type="ChEBI" id="CHEBI:59789"/>
        <dbReference type="ChEBI" id="CHEBI:90596"/>
        <dbReference type="ChEBI" id="CHEBI:90598"/>
        <dbReference type="EC" id="2.1.1.77"/>
    </reaction>
</comment>
<comment type="subcellular location">
    <subcellularLocation>
        <location evidence="1">Cytoplasm</location>
    </subcellularLocation>
</comment>
<comment type="similarity">
    <text evidence="2">Belongs to the methyltransferase superfamily. L-isoaspartyl/D-aspartyl protein methyltransferase family.</text>
</comment>
<comment type="sequence caution" evidence="2">
    <conflict type="erroneous initiation">
        <sequence resource="EMBL-CDS" id="CAB50643"/>
    </conflict>
    <text>Extended N-terminus.</text>
</comment>